<keyword id="KW-0012">Acyltransferase</keyword>
<keyword id="KW-0056">Arginine metabolism</keyword>
<keyword id="KW-0808">Transferase</keyword>
<organism>
    <name type="scientific">Escherichia coli (strain UTI89 / UPEC)</name>
    <dbReference type="NCBI Taxonomy" id="364106"/>
    <lineage>
        <taxon>Bacteria</taxon>
        <taxon>Pseudomonadati</taxon>
        <taxon>Pseudomonadota</taxon>
        <taxon>Gammaproteobacteria</taxon>
        <taxon>Enterobacterales</taxon>
        <taxon>Enterobacteriaceae</taxon>
        <taxon>Escherichia</taxon>
    </lineage>
</organism>
<evidence type="ECO:0000255" key="1">
    <source>
        <dbReference type="HAMAP-Rule" id="MF_01171"/>
    </source>
</evidence>
<protein>
    <recommendedName>
        <fullName evidence="1">Arginine N-succinyltransferase</fullName>
        <shortName evidence="1">AST</shortName>
        <ecNumber evidence="1">2.3.1.109</ecNumber>
    </recommendedName>
    <alternativeName>
        <fullName evidence="1">AOST</fullName>
    </alternativeName>
</protein>
<accession>Q1RB46</accession>
<proteinExistence type="inferred from homology"/>
<reference key="1">
    <citation type="journal article" date="2006" name="Proc. Natl. Acad. Sci. U.S.A.">
        <title>Identification of genes subject to positive selection in uropathogenic strains of Escherichia coli: a comparative genomics approach.</title>
        <authorList>
            <person name="Chen S.L."/>
            <person name="Hung C.-S."/>
            <person name="Xu J."/>
            <person name="Reigstad C.S."/>
            <person name="Magrini V."/>
            <person name="Sabo A."/>
            <person name="Blasiar D."/>
            <person name="Bieri T."/>
            <person name="Meyer R.R."/>
            <person name="Ozersky P."/>
            <person name="Armstrong J.R."/>
            <person name="Fulton R.S."/>
            <person name="Latreille J.P."/>
            <person name="Spieth J."/>
            <person name="Hooton T.M."/>
            <person name="Mardis E.R."/>
            <person name="Hultgren S.J."/>
            <person name="Gordon J.I."/>
        </authorList>
    </citation>
    <scope>NUCLEOTIDE SEQUENCE [LARGE SCALE GENOMIC DNA]</scope>
    <source>
        <strain>UTI89 / UPEC</strain>
    </source>
</reference>
<sequence length="344" mass="38551">MMVIRPVERSDVSALMQLASKTGGGLTSLPANEATLSVRIERAIKTWQGELPKSEQGYVFVLEDSETGTVAGICAIEVAVGLNDPWYNYRVGTLVHASKELNVYNALPTLFLSNDHTGSSELCTLFLDPKWRKEGNGYLLSKSRFMFMAAFRDKFNDKVVAEMRGVIDEHGYSPFWQSLGKRFFSMDFSRADFLCGTGQKAFIAELMPKHPIYTYFLSQEAQDVIGQVHPQTAPARAVLEKEGFRYRNYIDIFDGGPTLECDIDRVRAIRKSRLVEVAEGQPAQGDFPACLVANENYHHFRVVLVRTDPATERLILTAAQLDVLKCHAGDRVRLVRLCAEEKTA</sequence>
<feature type="chain" id="PRO_0000262325" description="Arginine N-succinyltransferase">
    <location>
        <begin position="1"/>
        <end position="344"/>
    </location>
</feature>
<feature type="active site" description="Proton donor" evidence="1">
    <location>
        <position position="229"/>
    </location>
</feature>
<feature type="binding site" evidence="1">
    <location>
        <position position="125"/>
    </location>
    <ligand>
        <name>succinyl-CoA</name>
        <dbReference type="ChEBI" id="CHEBI:57292"/>
    </ligand>
</feature>
<name>ASTA_ECOUT</name>
<dbReference type="EC" id="2.3.1.109" evidence="1"/>
<dbReference type="EMBL" id="CP000243">
    <property type="protein sequence ID" value="ABE07418.1"/>
    <property type="molecule type" value="Genomic_DNA"/>
</dbReference>
<dbReference type="RefSeq" id="WP_000989442.1">
    <property type="nucleotide sequence ID" value="NZ_CP064825.1"/>
</dbReference>
<dbReference type="SMR" id="Q1RB46"/>
<dbReference type="KEGG" id="eci:UTI89_C1942"/>
<dbReference type="HOGENOM" id="CLU_057655_0_0_6"/>
<dbReference type="UniPathway" id="UPA00185">
    <property type="reaction ID" value="UER00279"/>
</dbReference>
<dbReference type="Proteomes" id="UP000001952">
    <property type="component" value="Chromosome"/>
</dbReference>
<dbReference type="GO" id="GO:0008791">
    <property type="term" value="F:arginine N-succinyltransferase activity"/>
    <property type="evidence" value="ECO:0007669"/>
    <property type="project" value="UniProtKB-UniRule"/>
</dbReference>
<dbReference type="GO" id="GO:0019544">
    <property type="term" value="P:arginine catabolic process to glutamate"/>
    <property type="evidence" value="ECO:0007669"/>
    <property type="project" value="UniProtKB-UniRule"/>
</dbReference>
<dbReference type="GO" id="GO:0019545">
    <property type="term" value="P:arginine catabolic process to succinate"/>
    <property type="evidence" value="ECO:0007669"/>
    <property type="project" value="UniProtKB-UniRule"/>
</dbReference>
<dbReference type="Gene3D" id="2.40.40.20">
    <property type="match status" value="1"/>
</dbReference>
<dbReference type="HAMAP" id="MF_01171">
    <property type="entry name" value="AstA"/>
    <property type="match status" value="1"/>
</dbReference>
<dbReference type="InterPro" id="IPR016181">
    <property type="entry name" value="Acyl_CoA_acyltransferase"/>
</dbReference>
<dbReference type="InterPro" id="IPR007041">
    <property type="entry name" value="Arg_succinylTrfase_AstA/AruG"/>
</dbReference>
<dbReference type="InterPro" id="IPR017650">
    <property type="entry name" value="Arginine_N-succinylTrfase"/>
</dbReference>
<dbReference type="NCBIfam" id="TIGR03243">
    <property type="entry name" value="arg_catab_AOST"/>
    <property type="match status" value="1"/>
</dbReference>
<dbReference type="NCBIfam" id="TIGR03244">
    <property type="entry name" value="arg_catab_AstA"/>
    <property type="match status" value="1"/>
</dbReference>
<dbReference type="NCBIfam" id="NF007770">
    <property type="entry name" value="PRK10456.1"/>
    <property type="match status" value="1"/>
</dbReference>
<dbReference type="PANTHER" id="PTHR30420:SF1">
    <property type="entry name" value="ARGININE N-SUCCINYLTRANSFERASE"/>
    <property type="match status" value="1"/>
</dbReference>
<dbReference type="PANTHER" id="PTHR30420">
    <property type="entry name" value="N-SUCCINYLARGININE DIHYDROLASE"/>
    <property type="match status" value="1"/>
</dbReference>
<dbReference type="Pfam" id="PF04958">
    <property type="entry name" value="AstA"/>
    <property type="match status" value="1"/>
</dbReference>
<dbReference type="SUPFAM" id="SSF55729">
    <property type="entry name" value="Acyl-CoA N-acyltransferases (Nat)"/>
    <property type="match status" value="1"/>
</dbReference>
<comment type="function">
    <text evidence="1">Catalyzes the transfer of succinyl-CoA to arginine to produce N(2)-succinylarginine.</text>
</comment>
<comment type="catalytic activity">
    <reaction evidence="1">
        <text>succinyl-CoA + L-arginine = N(2)-succinyl-L-arginine + CoA + H(+)</text>
        <dbReference type="Rhea" id="RHEA:15185"/>
        <dbReference type="ChEBI" id="CHEBI:15378"/>
        <dbReference type="ChEBI" id="CHEBI:32682"/>
        <dbReference type="ChEBI" id="CHEBI:57287"/>
        <dbReference type="ChEBI" id="CHEBI:57292"/>
        <dbReference type="ChEBI" id="CHEBI:58241"/>
        <dbReference type="EC" id="2.3.1.109"/>
    </reaction>
</comment>
<comment type="pathway">
    <text evidence="1">Amino-acid degradation; L-arginine degradation via AST pathway; L-glutamate and succinate from L-arginine: step 1/5.</text>
</comment>
<comment type="similarity">
    <text evidence="1">Belongs to the arginine N-succinyltransferase family.</text>
</comment>
<gene>
    <name evidence="1" type="primary">astA</name>
    <name type="ordered locus">UTI89_C1942</name>
</gene>